<organism>
    <name type="scientific">Aliivibrio fischeri (strain MJ11)</name>
    <name type="common">Vibrio fischeri</name>
    <dbReference type="NCBI Taxonomy" id="388396"/>
    <lineage>
        <taxon>Bacteria</taxon>
        <taxon>Pseudomonadati</taxon>
        <taxon>Pseudomonadota</taxon>
        <taxon>Gammaproteobacteria</taxon>
        <taxon>Vibrionales</taxon>
        <taxon>Vibrionaceae</taxon>
        <taxon>Aliivibrio</taxon>
    </lineage>
</organism>
<evidence type="ECO:0000255" key="1">
    <source>
        <dbReference type="PROSITE-ProRule" id="PRU01182"/>
    </source>
</evidence>
<evidence type="ECO:0000305" key="2"/>
<name>Y123_ALIFM</name>
<reference key="1">
    <citation type="submission" date="2008-08" db="EMBL/GenBank/DDBJ databases">
        <title>Complete sequence of Vibrio fischeri strain MJ11.</title>
        <authorList>
            <person name="Mandel M.J."/>
            <person name="Stabb E.V."/>
            <person name="Ruby E.G."/>
            <person name="Ferriera S."/>
            <person name="Johnson J."/>
            <person name="Kravitz S."/>
            <person name="Beeson K."/>
            <person name="Sutton G."/>
            <person name="Rogers Y.-H."/>
            <person name="Friedman R."/>
            <person name="Frazier M."/>
            <person name="Venter J.C."/>
        </authorList>
    </citation>
    <scope>NUCLEOTIDE SEQUENCE [LARGE SCALE GENOMIC DNA]</scope>
    <source>
        <strain>MJ11</strain>
    </source>
</reference>
<comment type="similarity">
    <text evidence="2">Belongs to the UPF0758 family.</text>
</comment>
<dbReference type="EMBL" id="CP001139">
    <property type="protein sequence ID" value="ACH64992.1"/>
    <property type="molecule type" value="Genomic_DNA"/>
</dbReference>
<dbReference type="RefSeq" id="WP_012532754.1">
    <property type="nucleotide sequence ID" value="NC_011184.1"/>
</dbReference>
<dbReference type="SMR" id="B5FFF6"/>
<dbReference type="KEGG" id="vfm:VFMJ11_0123"/>
<dbReference type="HOGENOM" id="CLU_073529_0_1_6"/>
<dbReference type="Proteomes" id="UP000001857">
    <property type="component" value="Chromosome I"/>
</dbReference>
<dbReference type="GO" id="GO:0046872">
    <property type="term" value="F:metal ion binding"/>
    <property type="evidence" value="ECO:0007669"/>
    <property type="project" value="UniProtKB-KW"/>
</dbReference>
<dbReference type="GO" id="GO:0008237">
    <property type="term" value="F:metallopeptidase activity"/>
    <property type="evidence" value="ECO:0007669"/>
    <property type="project" value="UniProtKB-KW"/>
</dbReference>
<dbReference type="GO" id="GO:0006508">
    <property type="term" value="P:proteolysis"/>
    <property type="evidence" value="ECO:0007669"/>
    <property type="project" value="UniProtKB-KW"/>
</dbReference>
<dbReference type="CDD" id="cd08071">
    <property type="entry name" value="MPN_DUF2466"/>
    <property type="match status" value="1"/>
</dbReference>
<dbReference type="FunFam" id="3.40.140.10:FF:000032">
    <property type="entry name" value="DNA repair protein RadC"/>
    <property type="match status" value="1"/>
</dbReference>
<dbReference type="Gene3D" id="1.10.150.20">
    <property type="entry name" value="5' to 3' exonuclease, C-terminal subdomain"/>
    <property type="match status" value="1"/>
</dbReference>
<dbReference type="Gene3D" id="3.40.140.10">
    <property type="entry name" value="Cytidine Deaminase, domain 2"/>
    <property type="match status" value="1"/>
</dbReference>
<dbReference type="InterPro" id="IPR037518">
    <property type="entry name" value="MPN"/>
</dbReference>
<dbReference type="InterPro" id="IPR025657">
    <property type="entry name" value="RadC_JAB"/>
</dbReference>
<dbReference type="InterPro" id="IPR010994">
    <property type="entry name" value="RuvA_2-like"/>
</dbReference>
<dbReference type="InterPro" id="IPR001405">
    <property type="entry name" value="UPF0758"/>
</dbReference>
<dbReference type="InterPro" id="IPR020891">
    <property type="entry name" value="UPF0758_CS"/>
</dbReference>
<dbReference type="InterPro" id="IPR046778">
    <property type="entry name" value="UPF0758_N"/>
</dbReference>
<dbReference type="NCBIfam" id="NF000642">
    <property type="entry name" value="PRK00024.1"/>
    <property type="match status" value="1"/>
</dbReference>
<dbReference type="NCBIfam" id="TIGR00608">
    <property type="entry name" value="radc"/>
    <property type="match status" value="1"/>
</dbReference>
<dbReference type="PANTHER" id="PTHR30471">
    <property type="entry name" value="DNA REPAIR PROTEIN RADC"/>
    <property type="match status" value="1"/>
</dbReference>
<dbReference type="PANTHER" id="PTHR30471:SF3">
    <property type="entry name" value="UPF0758 PROTEIN YEES-RELATED"/>
    <property type="match status" value="1"/>
</dbReference>
<dbReference type="Pfam" id="PF04002">
    <property type="entry name" value="RadC"/>
    <property type="match status" value="1"/>
</dbReference>
<dbReference type="Pfam" id="PF20582">
    <property type="entry name" value="UPF0758_N"/>
    <property type="match status" value="1"/>
</dbReference>
<dbReference type="SUPFAM" id="SSF102712">
    <property type="entry name" value="JAB1/MPN domain"/>
    <property type="match status" value="1"/>
</dbReference>
<dbReference type="SUPFAM" id="SSF47781">
    <property type="entry name" value="RuvA domain 2-like"/>
    <property type="match status" value="1"/>
</dbReference>
<dbReference type="PROSITE" id="PS50249">
    <property type="entry name" value="MPN"/>
    <property type="match status" value="1"/>
</dbReference>
<dbReference type="PROSITE" id="PS01302">
    <property type="entry name" value="UPF0758"/>
    <property type="match status" value="1"/>
</dbReference>
<keyword id="KW-0378">Hydrolase</keyword>
<keyword id="KW-0479">Metal-binding</keyword>
<keyword id="KW-0482">Metalloprotease</keyword>
<keyword id="KW-0645">Protease</keyword>
<keyword id="KW-0862">Zinc</keyword>
<proteinExistence type="inferred from homology"/>
<accession>B5FFF6</accession>
<feature type="chain" id="PRO_1000089871" description="UPF0758 protein VFMJ11_0123">
    <location>
        <begin position="1"/>
        <end position="224"/>
    </location>
</feature>
<feature type="domain" description="MPN" evidence="1">
    <location>
        <begin position="102"/>
        <end position="224"/>
    </location>
</feature>
<feature type="short sequence motif" description="JAMM motif" evidence="1">
    <location>
        <begin position="173"/>
        <end position="186"/>
    </location>
</feature>
<feature type="binding site" evidence="1">
    <location>
        <position position="173"/>
    </location>
    <ligand>
        <name>Zn(2+)</name>
        <dbReference type="ChEBI" id="CHEBI:29105"/>
        <note>catalytic</note>
    </ligand>
</feature>
<feature type="binding site" evidence="1">
    <location>
        <position position="175"/>
    </location>
    <ligand>
        <name>Zn(2+)</name>
        <dbReference type="ChEBI" id="CHEBI:29105"/>
        <note>catalytic</note>
    </ligand>
</feature>
<feature type="binding site" evidence="1">
    <location>
        <position position="186"/>
    </location>
    <ligand>
        <name>Zn(2+)</name>
        <dbReference type="ChEBI" id="CHEBI:29105"/>
        <note>catalytic</note>
    </ligand>
</feature>
<sequence length="224" mass="25374">MSLMNLPEESRPREKLLALGPKSLTDAELLAIFLRTGIQGMNAIELADKLLKEFGSLRKLLSSDENEFCSHKGLGAAKFAQLQAVVEMTERYLFEKIEKEDALTSPEHTKRYLTRMLRDRHREAFYVLFLDNQHRVLKGEILFEGTIDAAAVYPREVVKRSIDYNAAAIILAHNHPSGVAEPSQADRRITKRISDAVELVDIRVLDHFVIGDGEIVSFAERGWI</sequence>
<protein>
    <recommendedName>
        <fullName>UPF0758 protein VFMJ11_0123</fullName>
    </recommendedName>
</protein>
<gene>
    <name type="ordered locus">VFMJ11_0123</name>
</gene>